<gene>
    <name evidence="1" type="primary">dxs</name>
    <name type="ordered locus">YpsIP31758_3112</name>
</gene>
<reference key="1">
    <citation type="journal article" date="2007" name="PLoS Genet.">
        <title>The complete genome sequence of Yersinia pseudotuberculosis IP31758, the causative agent of Far East scarlet-like fever.</title>
        <authorList>
            <person name="Eppinger M."/>
            <person name="Rosovitz M.J."/>
            <person name="Fricke W.F."/>
            <person name="Rasko D.A."/>
            <person name="Kokorina G."/>
            <person name="Fayolle C."/>
            <person name="Lindler L.E."/>
            <person name="Carniel E."/>
            <person name="Ravel J."/>
        </authorList>
    </citation>
    <scope>NUCLEOTIDE SEQUENCE [LARGE SCALE GENOMIC DNA]</scope>
    <source>
        <strain>IP 31758</strain>
    </source>
</reference>
<feature type="chain" id="PRO_1000059450" description="1-deoxy-D-xylulose-5-phosphate synthase">
    <location>
        <begin position="1"/>
        <end position="619"/>
    </location>
</feature>
<feature type="binding site" evidence="1">
    <location>
        <position position="80"/>
    </location>
    <ligand>
        <name>thiamine diphosphate</name>
        <dbReference type="ChEBI" id="CHEBI:58937"/>
    </ligand>
</feature>
<feature type="binding site" evidence="1">
    <location>
        <begin position="121"/>
        <end position="123"/>
    </location>
    <ligand>
        <name>thiamine diphosphate</name>
        <dbReference type="ChEBI" id="CHEBI:58937"/>
    </ligand>
</feature>
<feature type="binding site" evidence="1">
    <location>
        <position position="152"/>
    </location>
    <ligand>
        <name>Mg(2+)</name>
        <dbReference type="ChEBI" id="CHEBI:18420"/>
    </ligand>
</feature>
<feature type="binding site" evidence="1">
    <location>
        <begin position="153"/>
        <end position="154"/>
    </location>
    <ligand>
        <name>thiamine diphosphate</name>
        <dbReference type="ChEBI" id="CHEBI:58937"/>
    </ligand>
</feature>
<feature type="binding site" evidence="1">
    <location>
        <position position="181"/>
    </location>
    <ligand>
        <name>Mg(2+)</name>
        <dbReference type="ChEBI" id="CHEBI:18420"/>
    </ligand>
</feature>
<feature type="binding site" evidence="1">
    <location>
        <position position="181"/>
    </location>
    <ligand>
        <name>thiamine diphosphate</name>
        <dbReference type="ChEBI" id="CHEBI:58937"/>
    </ligand>
</feature>
<feature type="binding site" evidence="1">
    <location>
        <position position="288"/>
    </location>
    <ligand>
        <name>thiamine diphosphate</name>
        <dbReference type="ChEBI" id="CHEBI:58937"/>
    </ligand>
</feature>
<feature type="binding site" evidence="1">
    <location>
        <position position="370"/>
    </location>
    <ligand>
        <name>thiamine diphosphate</name>
        <dbReference type="ChEBI" id="CHEBI:58937"/>
    </ligand>
</feature>
<accession>A7FLE4</accession>
<proteinExistence type="inferred from homology"/>
<sequence>MSLDIAKYPTLALAENPEELRMLPKESLPKLCDELRQYLLTCVSRSSGHFASGLGVVELTVALHYVYNTPFDHLIWDVGHQAYPHKILTGRRDRISTIRQKDGLHPFPWRGESEYDVLSVGHSSTSISAGLGMAVAAEREGKGRRTVCVIGDGAITAGMAFEAMSHAGDIHSDMLVILNDNEMSISENVGGLNNHLAQLLSGKLYASLREGGKKAFSALPPIKDLLKRTEEHLKGMVVPSTLFEELGFNYIGPVDGHDVHTLTQTLKNMRDLKGPQLLHIMTKKGKGYAPAEKDPIGWHAVPKFDPASGTLPKSQSSLPTYSKIFGEWLCETAAKDSKLMAVTPAMREGSGMVRFSREYPQQYFDVAIAEQHAVTFAAGLAIGGYKPVVAIYSTFLQRAYDQLIHDVAIQNLPVLFAIDRGGLVGADGQTHQGAFDLSFMRCIPNMVIMAPSDENECRQMLYTGYHHNGPAAVRYPRGNGTSAVLEPLEMLPIGKGVLRREGEKIAILCFGTLLAQAQLAAENLNATLVDMRFVKPLDEELVLEMAAKHQVLVTVEENAIMGGAGSGVNELLMAKRRWVPVLNIGLPDLFVPQGEQDEMRSELGLDAAGIQRQIEAWLA</sequence>
<dbReference type="EC" id="2.2.1.7" evidence="1"/>
<dbReference type="EMBL" id="CP000720">
    <property type="protein sequence ID" value="ABS49260.1"/>
    <property type="molecule type" value="Genomic_DNA"/>
</dbReference>
<dbReference type="RefSeq" id="WP_012105576.1">
    <property type="nucleotide sequence ID" value="NC_009708.1"/>
</dbReference>
<dbReference type="SMR" id="A7FLE4"/>
<dbReference type="KEGG" id="ypi:YpsIP31758_3112"/>
<dbReference type="HOGENOM" id="CLU_009227_1_4_6"/>
<dbReference type="UniPathway" id="UPA00064">
    <property type="reaction ID" value="UER00091"/>
</dbReference>
<dbReference type="Proteomes" id="UP000002412">
    <property type="component" value="Chromosome"/>
</dbReference>
<dbReference type="GO" id="GO:0005829">
    <property type="term" value="C:cytosol"/>
    <property type="evidence" value="ECO:0007669"/>
    <property type="project" value="TreeGrafter"/>
</dbReference>
<dbReference type="GO" id="GO:0008661">
    <property type="term" value="F:1-deoxy-D-xylulose-5-phosphate synthase activity"/>
    <property type="evidence" value="ECO:0007669"/>
    <property type="project" value="UniProtKB-UniRule"/>
</dbReference>
<dbReference type="GO" id="GO:0000287">
    <property type="term" value="F:magnesium ion binding"/>
    <property type="evidence" value="ECO:0007669"/>
    <property type="project" value="UniProtKB-UniRule"/>
</dbReference>
<dbReference type="GO" id="GO:0030976">
    <property type="term" value="F:thiamine pyrophosphate binding"/>
    <property type="evidence" value="ECO:0007669"/>
    <property type="project" value="UniProtKB-UniRule"/>
</dbReference>
<dbReference type="GO" id="GO:0052865">
    <property type="term" value="P:1-deoxy-D-xylulose 5-phosphate biosynthetic process"/>
    <property type="evidence" value="ECO:0007669"/>
    <property type="project" value="UniProtKB-UniPathway"/>
</dbReference>
<dbReference type="GO" id="GO:0019288">
    <property type="term" value="P:isopentenyl diphosphate biosynthetic process, methylerythritol 4-phosphate pathway"/>
    <property type="evidence" value="ECO:0007669"/>
    <property type="project" value="TreeGrafter"/>
</dbReference>
<dbReference type="GO" id="GO:0016114">
    <property type="term" value="P:terpenoid biosynthetic process"/>
    <property type="evidence" value="ECO:0007669"/>
    <property type="project" value="UniProtKB-UniRule"/>
</dbReference>
<dbReference type="GO" id="GO:0009228">
    <property type="term" value="P:thiamine biosynthetic process"/>
    <property type="evidence" value="ECO:0007669"/>
    <property type="project" value="UniProtKB-UniRule"/>
</dbReference>
<dbReference type="CDD" id="cd02007">
    <property type="entry name" value="TPP_DXS"/>
    <property type="match status" value="1"/>
</dbReference>
<dbReference type="CDD" id="cd07033">
    <property type="entry name" value="TPP_PYR_DXS_TK_like"/>
    <property type="match status" value="1"/>
</dbReference>
<dbReference type="FunFam" id="3.40.50.920:FF:000002">
    <property type="entry name" value="1-deoxy-D-xylulose-5-phosphate synthase"/>
    <property type="match status" value="1"/>
</dbReference>
<dbReference type="FunFam" id="3.40.50.970:FF:000005">
    <property type="entry name" value="1-deoxy-D-xylulose-5-phosphate synthase"/>
    <property type="match status" value="1"/>
</dbReference>
<dbReference type="Gene3D" id="3.40.50.920">
    <property type="match status" value="1"/>
</dbReference>
<dbReference type="Gene3D" id="3.40.50.970">
    <property type="match status" value="2"/>
</dbReference>
<dbReference type="HAMAP" id="MF_00315">
    <property type="entry name" value="DXP_synth"/>
    <property type="match status" value="1"/>
</dbReference>
<dbReference type="InterPro" id="IPR005477">
    <property type="entry name" value="Dxylulose-5-P_synthase"/>
</dbReference>
<dbReference type="InterPro" id="IPR029061">
    <property type="entry name" value="THDP-binding"/>
</dbReference>
<dbReference type="InterPro" id="IPR009014">
    <property type="entry name" value="Transketo_C/PFOR_II"/>
</dbReference>
<dbReference type="InterPro" id="IPR005475">
    <property type="entry name" value="Transketolase-like_Pyr-bd"/>
</dbReference>
<dbReference type="InterPro" id="IPR020826">
    <property type="entry name" value="Transketolase_BS"/>
</dbReference>
<dbReference type="InterPro" id="IPR033248">
    <property type="entry name" value="Transketolase_C"/>
</dbReference>
<dbReference type="InterPro" id="IPR049557">
    <property type="entry name" value="Transketolase_CS"/>
</dbReference>
<dbReference type="NCBIfam" id="TIGR00204">
    <property type="entry name" value="dxs"/>
    <property type="match status" value="1"/>
</dbReference>
<dbReference type="NCBIfam" id="NF003933">
    <property type="entry name" value="PRK05444.2-2"/>
    <property type="match status" value="1"/>
</dbReference>
<dbReference type="PANTHER" id="PTHR43322">
    <property type="entry name" value="1-D-DEOXYXYLULOSE 5-PHOSPHATE SYNTHASE-RELATED"/>
    <property type="match status" value="1"/>
</dbReference>
<dbReference type="PANTHER" id="PTHR43322:SF5">
    <property type="entry name" value="1-DEOXY-D-XYLULOSE-5-PHOSPHATE SYNTHASE, CHLOROPLASTIC"/>
    <property type="match status" value="1"/>
</dbReference>
<dbReference type="Pfam" id="PF13292">
    <property type="entry name" value="DXP_synthase_N"/>
    <property type="match status" value="1"/>
</dbReference>
<dbReference type="Pfam" id="PF02779">
    <property type="entry name" value="Transket_pyr"/>
    <property type="match status" value="1"/>
</dbReference>
<dbReference type="Pfam" id="PF02780">
    <property type="entry name" value="Transketolase_C"/>
    <property type="match status" value="1"/>
</dbReference>
<dbReference type="SMART" id="SM00861">
    <property type="entry name" value="Transket_pyr"/>
    <property type="match status" value="1"/>
</dbReference>
<dbReference type="SUPFAM" id="SSF52518">
    <property type="entry name" value="Thiamin diphosphate-binding fold (THDP-binding)"/>
    <property type="match status" value="2"/>
</dbReference>
<dbReference type="SUPFAM" id="SSF52922">
    <property type="entry name" value="TK C-terminal domain-like"/>
    <property type="match status" value="1"/>
</dbReference>
<dbReference type="PROSITE" id="PS00801">
    <property type="entry name" value="TRANSKETOLASE_1"/>
    <property type="match status" value="1"/>
</dbReference>
<dbReference type="PROSITE" id="PS00802">
    <property type="entry name" value="TRANSKETOLASE_2"/>
    <property type="match status" value="1"/>
</dbReference>
<name>DXS_YERP3</name>
<comment type="function">
    <text evidence="1">Catalyzes the acyloin condensation reaction between C atoms 2 and 3 of pyruvate and glyceraldehyde 3-phosphate to yield 1-deoxy-D-xylulose-5-phosphate (DXP).</text>
</comment>
<comment type="catalytic activity">
    <reaction evidence="1">
        <text>D-glyceraldehyde 3-phosphate + pyruvate + H(+) = 1-deoxy-D-xylulose 5-phosphate + CO2</text>
        <dbReference type="Rhea" id="RHEA:12605"/>
        <dbReference type="ChEBI" id="CHEBI:15361"/>
        <dbReference type="ChEBI" id="CHEBI:15378"/>
        <dbReference type="ChEBI" id="CHEBI:16526"/>
        <dbReference type="ChEBI" id="CHEBI:57792"/>
        <dbReference type="ChEBI" id="CHEBI:59776"/>
        <dbReference type="EC" id="2.2.1.7"/>
    </reaction>
</comment>
<comment type="cofactor">
    <cofactor evidence="1">
        <name>Mg(2+)</name>
        <dbReference type="ChEBI" id="CHEBI:18420"/>
    </cofactor>
    <text evidence="1">Binds 1 Mg(2+) ion per subunit.</text>
</comment>
<comment type="cofactor">
    <cofactor evidence="1">
        <name>thiamine diphosphate</name>
        <dbReference type="ChEBI" id="CHEBI:58937"/>
    </cofactor>
    <text evidence="1">Binds 1 thiamine pyrophosphate per subunit.</text>
</comment>
<comment type="pathway">
    <text evidence="1">Metabolic intermediate biosynthesis; 1-deoxy-D-xylulose 5-phosphate biosynthesis; 1-deoxy-D-xylulose 5-phosphate from D-glyceraldehyde 3-phosphate and pyruvate: step 1/1.</text>
</comment>
<comment type="subunit">
    <text evidence="1">Homodimer.</text>
</comment>
<comment type="similarity">
    <text evidence="1">Belongs to the transketolase family. DXPS subfamily.</text>
</comment>
<keyword id="KW-0414">Isoprene biosynthesis</keyword>
<keyword id="KW-0460">Magnesium</keyword>
<keyword id="KW-0479">Metal-binding</keyword>
<keyword id="KW-0784">Thiamine biosynthesis</keyword>
<keyword id="KW-0786">Thiamine pyrophosphate</keyword>
<keyword id="KW-0808">Transferase</keyword>
<evidence type="ECO:0000255" key="1">
    <source>
        <dbReference type="HAMAP-Rule" id="MF_00315"/>
    </source>
</evidence>
<organism>
    <name type="scientific">Yersinia pseudotuberculosis serotype O:1b (strain IP 31758)</name>
    <dbReference type="NCBI Taxonomy" id="349747"/>
    <lineage>
        <taxon>Bacteria</taxon>
        <taxon>Pseudomonadati</taxon>
        <taxon>Pseudomonadota</taxon>
        <taxon>Gammaproteobacteria</taxon>
        <taxon>Enterobacterales</taxon>
        <taxon>Yersiniaceae</taxon>
        <taxon>Yersinia</taxon>
    </lineage>
</organism>
<protein>
    <recommendedName>
        <fullName evidence="1">1-deoxy-D-xylulose-5-phosphate synthase</fullName>
        <ecNumber evidence="1">2.2.1.7</ecNumber>
    </recommendedName>
    <alternativeName>
        <fullName evidence="1">1-deoxyxylulose-5-phosphate synthase</fullName>
        <shortName evidence="1">DXP synthase</shortName>
        <shortName evidence="1">DXPS</shortName>
    </alternativeName>
</protein>